<keyword id="KW-0002">3D-structure</keyword>
<keyword id="KW-0119">Carbohydrate metabolism</keyword>
<keyword id="KW-0961">Cell wall biogenesis/degradation</keyword>
<keyword id="KW-0903">Direct protein sequencing</keyword>
<keyword id="KW-1015">Disulfide bond</keyword>
<keyword id="KW-0325">Glycoprotein</keyword>
<keyword id="KW-0326">Glycosidase</keyword>
<keyword id="KW-0378">Hydrolase</keyword>
<keyword id="KW-0624">Polysaccharide degradation</keyword>
<keyword id="KW-0964">Secreted</keyword>
<keyword id="KW-0732">Signal</keyword>
<dbReference type="EC" id="3.2.1.171"/>
<dbReference type="EMBL" id="S80208">
    <property type="protein sequence ID" value="AAB35485.1"/>
    <property type="molecule type" value="Genomic_DNA"/>
</dbReference>
<dbReference type="EMBL" id="X83525">
    <property type="protein sequence ID" value="CAA58507.2"/>
    <property type="molecule type" value="Genomic_DNA"/>
</dbReference>
<dbReference type="EMBL" id="L35499">
    <property type="protein sequence ID" value="AAA64367.1"/>
    <property type="molecule type" value="mRNA"/>
</dbReference>
<dbReference type="PIR" id="A55415">
    <property type="entry name" value="A55415"/>
</dbReference>
<dbReference type="PDB" id="1RMG">
    <property type="method" value="X-ray"/>
    <property type="resolution" value="2.00 A"/>
    <property type="chains" value="A=19-440"/>
</dbReference>
<dbReference type="PDBsum" id="1RMG"/>
<dbReference type="SMR" id="Q00001"/>
<dbReference type="CAZy" id="GH28">
    <property type="family name" value="Glycoside Hydrolase Family 28"/>
</dbReference>
<dbReference type="GlyCosmos" id="Q00001">
    <property type="glycosylation" value="20 sites, No reported glycans"/>
</dbReference>
<dbReference type="KEGG" id="ag:AAA64367"/>
<dbReference type="VEuPathDB" id="FungiDB:ASPACDRAFT_34742"/>
<dbReference type="BioCyc" id="MetaCyc:MONOMER-16264"/>
<dbReference type="BRENDA" id="3.2.1.171">
    <property type="organism ID" value="488"/>
</dbReference>
<dbReference type="EvolutionaryTrace" id="Q00001"/>
<dbReference type="GO" id="GO:0005576">
    <property type="term" value="C:extracellular region"/>
    <property type="evidence" value="ECO:0007669"/>
    <property type="project" value="UniProtKB-SubCell"/>
</dbReference>
<dbReference type="GO" id="GO:0004650">
    <property type="term" value="F:polygalacturonase activity"/>
    <property type="evidence" value="ECO:0007669"/>
    <property type="project" value="InterPro"/>
</dbReference>
<dbReference type="GO" id="GO:0046576">
    <property type="term" value="F:rhamnogalacturonan alpha-L-rhamnopyranosyl-(1-&gt;4)-alpha-D-galactopyranosyluronide lyase activity"/>
    <property type="evidence" value="ECO:0007669"/>
    <property type="project" value="UniProtKB-ARBA"/>
</dbReference>
<dbReference type="GO" id="GO:0071555">
    <property type="term" value="P:cell wall organization"/>
    <property type="evidence" value="ECO:0007669"/>
    <property type="project" value="UniProtKB-KW"/>
</dbReference>
<dbReference type="GO" id="GO:0000272">
    <property type="term" value="P:polysaccharide catabolic process"/>
    <property type="evidence" value="ECO:0007669"/>
    <property type="project" value="UniProtKB-KW"/>
</dbReference>
<dbReference type="FunFam" id="2.160.20.10:FF:000025">
    <property type="entry name" value="Probable rhamnogalacturonase B"/>
    <property type="match status" value="1"/>
</dbReference>
<dbReference type="Gene3D" id="2.160.20.10">
    <property type="entry name" value="Single-stranded right-handed beta-helix, Pectin lyase-like"/>
    <property type="match status" value="1"/>
</dbReference>
<dbReference type="InterPro" id="IPR000743">
    <property type="entry name" value="Glyco_hydro_28"/>
</dbReference>
<dbReference type="InterPro" id="IPR012334">
    <property type="entry name" value="Pectin_lyas_fold"/>
</dbReference>
<dbReference type="InterPro" id="IPR011050">
    <property type="entry name" value="Pectin_lyase_fold/virulence"/>
</dbReference>
<dbReference type="PANTHER" id="PTHR31736">
    <property type="match status" value="1"/>
</dbReference>
<dbReference type="PANTHER" id="PTHR31736:SF19">
    <property type="entry name" value="PECTIN LYASE SUPERFAMILY PROTEIN-RELATED"/>
    <property type="match status" value="1"/>
</dbReference>
<dbReference type="Pfam" id="PF00295">
    <property type="entry name" value="Glyco_hydro_28"/>
    <property type="match status" value="1"/>
</dbReference>
<dbReference type="SUPFAM" id="SSF51126">
    <property type="entry name" value="Pectin lyase-like"/>
    <property type="match status" value="1"/>
</dbReference>
<name>RHGA_ASPAC</name>
<gene>
    <name type="primary">rhgA</name>
</gene>
<comment type="function">
    <text evidence="2">Pectinolytic enzymes consist of four classes of enzymes: pectine lyase, polygalacturonase, pectin methylesterase and rhamnogalacturonase. Has a positive effect in the apple hot-mash liquefaction process. Hydrolyzes alpha-D-galacturonopyranosyl-(1,2)-alpha-L-rhamnopyranosyl linkages in the backbone of the hairy regions of pectins.</text>
</comment>
<comment type="catalytic activity">
    <reaction>
        <text>Endohydrolysis of alpha-D-GalA-(1-&gt;2)-alpha-L-Rha glycosidic bond in the rhamnogalacturonan I backbone with initial inversion of anomeric configuration releasing oligosaccharides with beta-D-GalA at the reducing end.</text>
        <dbReference type="EC" id="3.2.1.171"/>
    </reaction>
</comment>
<comment type="biophysicochemical properties">
    <phDependence>
        <text>Optimum pH is 3.5. Unstable above pH 6.0.</text>
    </phDependence>
    <temperatureDependence>
        <text>Optimum temperature is 30-50 degrees Celsius.</text>
    </temperatureDependence>
</comment>
<comment type="subcellular location">
    <subcellularLocation>
        <location>Secreted</location>
    </subcellularLocation>
</comment>
<comment type="PTM">
    <text>The N-terminus is blocked.</text>
</comment>
<comment type="PTM">
    <text>N-glycosylated and may also be O-glycosylated.</text>
</comment>
<comment type="similarity">
    <text evidence="3">Belongs to the glycosyl hydrolase 28 family.</text>
</comment>
<accession>Q00001</accession>
<accession>Q00018</accession>
<evidence type="ECO:0000250" key="1"/>
<evidence type="ECO:0000269" key="2">
    <source>
    </source>
</evidence>
<evidence type="ECO:0000305" key="3"/>
<evidence type="ECO:0007829" key="4">
    <source>
        <dbReference type="PDB" id="1RMG"/>
    </source>
</evidence>
<protein>
    <recommendedName>
        <fullName>Rhamnogalacturonase A</fullName>
        <shortName>RGase A</shortName>
        <shortName>RHG A</shortName>
        <ecNumber>3.2.1.171</ecNumber>
    </recommendedName>
    <alternativeName>
        <fullName>Rhamnogalacturonan hydrolase A</fullName>
    </alternativeName>
</protein>
<organism>
    <name type="scientific">Aspergillus aculeatus</name>
    <dbReference type="NCBI Taxonomy" id="5053"/>
    <lineage>
        <taxon>Eukaryota</taxon>
        <taxon>Fungi</taxon>
        <taxon>Dikarya</taxon>
        <taxon>Ascomycota</taxon>
        <taxon>Pezizomycotina</taxon>
        <taxon>Eurotiomycetes</taxon>
        <taxon>Eurotiomycetidae</taxon>
        <taxon>Eurotiales</taxon>
        <taxon>Aspergillaceae</taxon>
        <taxon>Aspergillus</taxon>
        <taxon>Aspergillus subgen. Circumdati</taxon>
    </lineage>
</organism>
<proteinExistence type="evidence at protein level"/>
<feature type="signal peptide">
    <location>
        <begin position="1"/>
        <end position="18"/>
    </location>
</feature>
<feature type="chain" id="PRO_0000024825" description="Rhamnogalacturonase A">
    <location>
        <begin position="19"/>
        <end position="440"/>
    </location>
</feature>
<feature type="active site" description="Proton donor" evidence="1">
    <location>
        <position position="215"/>
    </location>
</feature>
<feature type="active site" evidence="1">
    <location>
        <position position="290"/>
    </location>
</feature>
<feature type="glycosylation site" description="N-linked (GlcNAc...) asparagine">
    <location>
        <position position="50"/>
    </location>
</feature>
<feature type="glycosylation site" description="N-linked (GlcNAc...) asparagine">
    <location>
        <position position="317"/>
    </location>
</feature>
<feature type="glycosylation site" description="O-linked (Man) threonine">
    <location>
        <position position="385"/>
    </location>
</feature>
<feature type="glycosylation site" description="O-linked (Man) serine">
    <location>
        <position position="386"/>
    </location>
</feature>
<feature type="glycosylation site" description="O-linked (Man) threonine">
    <location>
        <position position="388"/>
    </location>
</feature>
<feature type="glycosylation site" description="O-linked (Man) threonine">
    <location>
        <position position="389"/>
    </location>
</feature>
<feature type="glycosylation site" description="O-linked (Man) threonine">
    <location>
        <position position="390"/>
    </location>
</feature>
<feature type="glycosylation site" description="O-linked (Man) serine">
    <location>
        <position position="391"/>
    </location>
</feature>
<feature type="glycosylation site" description="O-linked (Man) threonine">
    <location>
        <position position="392"/>
    </location>
</feature>
<feature type="glycosylation site" description="O-linked (Man) threonine">
    <location>
        <position position="394"/>
    </location>
</feature>
<feature type="glycosylation site" description="O-linked (Man) serine">
    <location>
        <position position="398"/>
    </location>
</feature>
<feature type="glycosylation site" description="O-linked (Man) serine">
    <location>
        <position position="401"/>
    </location>
</feature>
<feature type="glycosylation site" description="O-linked (Man) threonine">
    <location>
        <position position="403"/>
    </location>
</feature>
<feature type="glycosylation site" description="O-linked (Man) threonine">
    <location>
        <position position="404"/>
    </location>
</feature>
<feature type="glycosylation site" description="O-linked (Man) threonine">
    <location>
        <position position="416"/>
    </location>
</feature>
<feature type="glycosylation site" description="O-linked (Man) serine">
    <location>
        <position position="418"/>
    </location>
</feature>
<feature type="glycosylation site" description="O-linked (Man) threonine">
    <location>
        <position position="423"/>
    </location>
</feature>
<feature type="glycosylation site" description="O-linked (Man) threonine">
    <location>
        <position position="426"/>
    </location>
</feature>
<feature type="glycosylation site" description="O-linked (Man) serine">
    <location>
        <position position="427"/>
    </location>
</feature>
<feature type="glycosylation site" description="O-linked (Man) serine">
    <location>
        <position position="436"/>
    </location>
</feature>
<feature type="disulfide bond">
    <location>
        <begin position="39"/>
        <end position="65"/>
    </location>
</feature>
<feature type="disulfide bond">
    <location>
        <begin position="217"/>
        <end position="234"/>
    </location>
</feature>
<feature type="disulfide bond">
    <location>
        <begin position="340"/>
        <end position="346"/>
    </location>
</feature>
<feature type="disulfide bond">
    <location>
        <begin position="368"/>
        <end position="377"/>
    </location>
</feature>
<feature type="sequence conflict" description="In Ref. 2; AAA64367." evidence="3" ref="2">
    <original>A</original>
    <variation>G</variation>
    <location>
        <position position="3"/>
    </location>
</feature>
<feature type="sequence conflict" description="In Ref. 2; AAA64367." evidence="3" ref="2">
    <original>S</original>
    <variation>A</variation>
    <location>
        <position position="11"/>
    </location>
</feature>
<feature type="sequence conflict" description="In Ref. 2; AAA64367." evidence="3" ref="2">
    <original>V</original>
    <variation>I</variation>
    <location>
        <position position="161"/>
    </location>
</feature>
<feature type="helix" evidence="4">
    <location>
        <begin position="30"/>
        <end position="36"/>
    </location>
</feature>
<feature type="strand" evidence="4">
    <location>
        <begin position="38"/>
        <end position="40"/>
    </location>
</feature>
<feature type="helix" evidence="4">
    <location>
        <begin position="41"/>
        <end position="44"/>
    </location>
</feature>
<feature type="strand" evidence="4">
    <location>
        <begin position="49"/>
        <end position="53"/>
    </location>
</feature>
<feature type="helix" evidence="4">
    <location>
        <begin position="55"/>
        <end position="65"/>
    </location>
</feature>
<feature type="strand" evidence="4">
    <location>
        <begin position="70"/>
        <end position="73"/>
    </location>
</feature>
<feature type="strand" evidence="4">
    <location>
        <begin position="75"/>
        <end position="80"/>
    </location>
</feature>
<feature type="strand" evidence="4">
    <location>
        <begin position="84"/>
        <end position="88"/>
    </location>
</feature>
<feature type="strand" evidence="4">
    <location>
        <begin position="90"/>
        <end position="96"/>
    </location>
</feature>
<feature type="strand" evidence="4">
    <location>
        <begin position="98"/>
        <end position="102"/>
    </location>
</feature>
<feature type="strand" evidence="4">
    <location>
        <begin position="107"/>
        <end position="122"/>
    </location>
</feature>
<feature type="strand" evidence="4">
    <location>
        <begin position="124"/>
        <end position="126"/>
    </location>
</feature>
<feature type="strand" evidence="4">
    <location>
        <begin position="129"/>
        <end position="131"/>
    </location>
</feature>
<feature type="helix" evidence="4">
    <location>
        <begin position="135"/>
        <end position="138"/>
    </location>
</feature>
<feature type="turn" evidence="4">
    <location>
        <begin position="139"/>
        <end position="141"/>
    </location>
</feature>
<feature type="strand" evidence="4">
    <location>
        <begin position="146"/>
        <end position="164"/>
    </location>
</feature>
<feature type="strand" evidence="4">
    <location>
        <begin position="170"/>
        <end position="187"/>
    </location>
</feature>
<feature type="strand" evidence="4">
    <location>
        <begin position="196"/>
        <end position="245"/>
    </location>
</feature>
<feature type="strand" evidence="4">
    <location>
        <begin position="249"/>
        <end position="265"/>
    </location>
</feature>
<feature type="strand" evidence="4">
    <location>
        <begin position="267"/>
        <end position="274"/>
    </location>
</feature>
<feature type="strand" evidence="4">
    <location>
        <begin position="277"/>
        <end position="293"/>
    </location>
</feature>
<feature type="strand" evidence="4">
    <location>
        <begin position="295"/>
        <end position="299"/>
    </location>
</feature>
<feature type="strand" evidence="4">
    <location>
        <begin position="308"/>
        <end position="311"/>
    </location>
</feature>
<feature type="strand" evidence="4">
    <location>
        <begin position="314"/>
        <end position="328"/>
    </location>
</feature>
<feature type="turn" evidence="4">
    <location>
        <begin position="330"/>
        <end position="332"/>
    </location>
</feature>
<feature type="strand" evidence="4">
    <location>
        <begin position="335"/>
        <end position="339"/>
    </location>
</feature>
<feature type="strand" evidence="4">
    <location>
        <begin position="346"/>
        <end position="362"/>
    </location>
</feature>
<feature type="strand" evidence="4">
    <location>
        <begin position="364"/>
        <end position="375"/>
    </location>
</feature>
<feature type="strand" evidence="4">
    <location>
        <begin position="388"/>
        <end position="393"/>
    </location>
</feature>
<feature type="strand" evidence="4">
    <location>
        <begin position="415"/>
        <end position="417"/>
    </location>
</feature>
<sequence>MRALFLLALGSIPALVSGQLSGSVGPLTSASTKGATKTCNILSYGAVADNSTDVGPAITSAWAACKSGGLVYIPSGNYALNTWVTLTGGSATAIQLDGIIYRTGTASGNMIAVTDTTDFELFSSTSKGAVQGFGYVYHAEGTYGARILRLTDVTHFSVHDVILVDAPAFHFTMDTCSDGEVYNMAIRGGNEGGLDGIDVWGSNIWVHDVEVTNKDECVTVKSPANNILVESIYCNWSGGCAMGSLGADTDVTDIVYRNVYTWSSNQMYMIKSNGGSGTVSNVLLENFIGHGNAYSLDIDGYWSSMTAVAGDGVQLNNITVKNWKGTEANGATRPPIRVVCSDTAPCTDLTLEDIAIWTESGSSELYLCRSAYGSGYCLKDSSSHTSYTTTSTVTAAPSGYSATTMAADLATAFGLTASIPIPTIPTSFYPGLTPYSALAG</sequence>
<reference key="1">
    <citation type="journal article" date="1995" name="Appl. Microbiol. Biotechnol.">
        <title>Cloning, sequence and expression of the gene coding for rhamnogalacturonase of Aspergillus aculeatus; a novel pectinolytic enzyme.</title>
        <authorList>
            <person name="Suykerbuyk M.E.G."/>
            <person name="Schaap P.J."/>
            <person name="Stam H."/>
            <person name="Musters W."/>
            <person name="Visser J."/>
        </authorList>
    </citation>
    <scope>NUCLEOTIDE SEQUENCE [GENOMIC DNA]</scope>
    <scope>PARTIAL PROTEIN SEQUENCE</scope>
    <source>
        <strain>CBS 115.80</strain>
    </source>
</reference>
<reference key="2">
    <citation type="journal article" date="1994" name="J. Biol. Chem.">
        <title>Cloning and characterization of two structurally and functionally divergent rhamnogalacturonases from Aspergillus aculeatus.</title>
        <authorList>
            <person name="Kofod L.V."/>
            <person name="Kauppinen S."/>
            <person name="Christgau S."/>
            <person name="Andersen L.N."/>
            <person name="Heldt-Hansen H.P."/>
            <person name="Doerreich K."/>
            <person name="Dalboege H."/>
        </authorList>
    </citation>
    <scope>NUCLEOTIDE SEQUENCE [MRNA]</scope>
    <scope>PARTIAL PROTEIN SEQUENCE</scope>
    <source>
        <strain>KSM 510</strain>
    </source>
</reference>
<reference key="3">
    <citation type="journal article" date="1995" name="Glycobiology">
        <title>The backbone of the pectic polysaccharide rhamnogalacturonan I is cleaved by an endohydrolase and an endolyase.</title>
        <authorList>
            <person name="Azadi P."/>
            <person name="O'Neill M.A."/>
            <person name="Bergmann C."/>
            <person name="Darvill A.G."/>
            <person name="Albersheim P."/>
        </authorList>
    </citation>
    <scope>CHARACTERIZATION</scope>
</reference>
<reference key="4">
    <citation type="journal article" date="1997" name="Structure">
        <title>The crystal structure of rhamnogalacturonase A from Aspergillus aculeatus: a right-handed parallel beta helix.</title>
        <authorList>
            <person name="Petersen T.N."/>
            <person name="Kauppinen S."/>
            <person name="Larsen S."/>
        </authorList>
    </citation>
    <scope>X-RAY CRYSTALLOGRAPHY (2.0 ANGSTROMS)</scope>
</reference>
<reference key="5">
    <citation type="journal article" date="1998" name="Biochem. Biophys. Res. Commun.">
        <title>Stereochemical course of hydrolysis catalysed by alpha-L-rhamnosyl and alpha-D-galacturonosyl hydrolases from Aspergillus aculeatus.</title>
        <authorList>
            <person name="Pitson S.M."/>
            <person name="Mutter M."/>
            <person name="van den Broek L.A."/>
            <person name="Voragen A.G."/>
            <person name="Beldman G."/>
        </authorList>
    </citation>
    <scope>FUNCTION</scope>
</reference>